<reference key="1">
    <citation type="journal article" date="2009" name="Genome Res.">
        <title>Complete genome of the cellulolytic thermophile Acidothermus cellulolyticus 11B provides insights into its ecophysiological and evolutionary adaptations.</title>
        <authorList>
            <person name="Barabote R.D."/>
            <person name="Xie G."/>
            <person name="Leu D.H."/>
            <person name="Normand P."/>
            <person name="Necsulea A."/>
            <person name="Daubin V."/>
            <person name="Medigue C."/>
            <person name="Adney W.S."/>
            <person name="Xu X.C."/>
            <person name="Lapidus A."/>
            <person name="Parales R.E."/>
            <person name="Detter C."/>
            <person name="Pujic P."/>
            <person name="Bruce D."/>
            <person name="Lavire C."/>
            <person name="Challacombe J.F."/>
            <person name="Brettin T.S."/>
            <person name="Berry A.M."/>
        </authorList>
    </citation>
    <scope>NUCLEOTIDE SEQUENCE [LARGE SCALE GENOMIC DNA]</scope>
    <source>
        <strain>ATCC 43068 / DSM 8971 / 11B</strain>
    </source>
</reference>
<dbReference type="EMBL" id="CP000481">
    <property type="protein sequence ID" value="ABK53500.1"/>
    <property type="molecule type" value="Genomic_DNA"/>
</dbReference>
<dbReference type="RefSeq" id="WP_011720563.1">
    <property type="nucleotide sequence ID" value="NC_008578.1"/>
</dbReference>
<dbReference type="SMR" id="A0LVP0"/>
<dbReference type="FunCoup" id="A0LVP0">
    <property type="interactions" value="58"/>
</dbReference>
<dbReference type="STRING" id="351607.Acel_1728"/>
<dbReference type="KEGG" id="ace:Acel_1728"/>
<dbReference type="eggNOG" id="COG0691">
    <property type="taxonomic scope" value="Bacteria"/>
</dbReference>
<dbReference type="HOGENOM" id="CLU_108953_0_0_11"/>
<dbReference type="InParanoid" id="A0LVP0"/>
<dbReference type="OrthoDB" id="9805462at2"/>
<dbReference type="Proteomes" id="UP000008221">
    <property type="component" value="Chromosome"/>
</dbReference>
<dbReference type="GO" id="GO:0005829">
    <property type="term" value="C:cytosol"/>
    <property type="evidence" value="ECO:0007669"/>
    <property type="project" value="TreeGrafter"/>
</dbReference>
<dbReference type="GO" id="GO:0003723">
    <property type="term" value="F:RNA binding"/>
    <property type="evidence" value="ECO:0007669"/>
    <property type="project" value="UniProtKB-UniRule"/>
</dbReference>
<dbReference type="GO" id="GO:0070929">
    <property type="term" value="P:trans-translation"/>
    <property type="evidence" value="ECO:0007669"/>
    <property type="project" value="UniProtKB-UniRule"/>
</dbReference>
<dbReference type="CDD" id="cd09294">
    <property type="entry name" value="SmpB"/>
    <property type="match status" value="1"/>
</dbReference>
<dbReference type="Gene3D" id="2.40.280.10">
    <property type="match status" value="1"/>
</dbReference>
<dbReference type="HAMAP" id="MF_00023">
    <property type="entry name" value="SmpB"/>
    <property type="match status" value="1"/>
</dbReference>
<dbReference type="InterPro" id="IPR023620">
    <property type="entry name" value="SmpB"/>
</dbReference>
<dbReference type="InterPro" id="IPR000037">
    <property type="entry name" value="SsrA-bd_prot"/>
</dbReference>
<dbReference type="InterPro" id="IPR020081">
    <property type="entry name" value="SsrA-bd_prot_CS"/>
</dbReference>
<dbReference type="NCBIfam" id="NF003843">
    <property type="entry name" value="PRK05422.1"/>
    <property type="match status" value="1"/>
</dbReference>
<dbReference type="NCBIfam" id="TIGR00086">
    <property type="entry name" value="smpB"/>
    <property type="match status" value="1"/>
</dbReference>
<dbReference type="PANTHER" id="PTHR30308:SF2">
    <property type="entry name" value="SSRA-BINDING PROTEIN"/>
    <property type="match status" value="1"/>
</dbReference>
<dbReference type="PANTHER" id="PTHR30308">
    <property type="entry name" value="TMRNA-BINDING COMPONENT OF TRANS-TRANSLATION TAGGING COMPLEX"/>
    <property type="match status" value="1"/>
</dbReference>
<dbReference type="Pfam" id="PF01668">
    <property type="entry name" value="SmpB"/>
    <property type="match status" value="1"/>
</dbReference>
<dbReference type="SUPFAM" id="SSF74982">
    <property type="entry name" value="Small protein B (SmpB)"/>
    <property type="match status" value="1"/>
</dbReference>
<dbReference type="PROSITE" id="PS01317">
    <property type="entry name" value="SSRP"/>
    <property type="match status" value="1"/>
</dbReference>
<name>SSRP_ACIC1</name>
<comment type="function">
    <text evidence="1">Required for rescue of stalled ribosomes mediated by trans-translation. Binds to transfer-messenger RNA (tmRNA), required for stable association of tmRNA with ribosomes. tmRNA and SmpB together mimic tRNA shape, replacing the anticodon stem-loop with SmpB. tmRNA is encoded by the ssrA gene; the 2 termini fold to resemble tRNA(Ala) and it encodes a 'tag peptide', a short internal open reading frame. During trans-translation Ala-aminoacylated tmRNA acts like a tRNA, entering the A-site of stalled ribosomes, displacing the stalled mRNA. The ribosome then switches to translate the ORF on the tmRNA; the nascent peptide is terminated with the 'tag peptide' encoded by the tmRNA and targeted for degradation. The ribosome is freed to recommence translation, which seems to be the essential function of trans-translation.</text>
</comment>
<comment type="subcellular location">
    <subcellularLocation>
        <location evidence="1">Cytoplasm</location>
    </subcellularLocation>
    <text evidence="1">The tmRNA-SmpB complex associates with stalled 70S ribosomes.</text>
</comment>
<comment type="similarity">
    <text evidence="1">Belongs to the SmpB family.</text>
</comment>
<proteinExistence type="inferred from homology"/>
<sequence>MARESGRKLIASNKKARHDYHIEDTYEAGIVLTGTEVKSLRAGRASLVDGFALIKDGEVWLQNVHIPEYAEGSWTNHEPRRPRKLLLHKREILRLLGKTRETGLTLVPLSLYFRDGKAKVELALARGKRAYDKRQALAERHAQREIARALGRRVKGHRM</sequence>
<accession>A0LVP0</accession>
<feature type="chain" id="PRO_1000001989" description="SsrA-binding protein">
    <location>
        <begin position="1"/>
        <end position="159"/>
    </location>
</feature>
<organism>
    <name type="scientific">Acidothermus cellulolyticus (strain ATCC 43068 / DSM 8971 / 11B)</name>
    <dbReference type="NCBI Taxonomy" id="351607"/>
    <lineage>
        <taxon>Bacteria</taxon>
        <taxon>Bacillati</taxon>
        <taxon>Actinomycetota</taxon>
        <taxon>Actinomycetes</taxon>
        <taxon>Acidothermales</taxon>
        <taxon>Acidothermaceae</taxon>
        <taxon>Acidothermus</taxon>
    </lineage>
</organism>
<protein>
    <recommendedName>
        <fullName evidence="1">SsrA-binding protein</fullName>
    </recommendedName>
    <alternativeName>
        <fullName evidence="1">Small protein B</fullName>
    </alternativeName>
</protein>
<keyword id="KW-0963">Cytoplasm</keyword>
<keyword id="KW-1185">Reference proteome</keyword>
<keyword id="KW-0694">RNA-binding</keyword>
<evidence type="ECO:0000255" key="1">
    <source>
        <dbReference type="HAMAP-Rule" id="MF_00023"/>
    </source>
</evidence>
<gene>
    <name evidence="1" type="primary">smpB</name>
    <name type="ordered locus">Acel_1728</name>
</gene>